<comment type="function">
    <text evidence="1">Component of the MICOS complex, a large protein complex of the mitochondrial inner membrane that plays crucial roles in the maintenance of crista junctions, inner membrane architecture, and formation of contact sites to the outer membrane.</text>
</comment>
<comment type="subunit">
    <text evidence="1">Component of the mitochondrial contact site and cristae organizing system (MICOS) complex (also known as MINOS or MitOS complex).</text>
</comment>
<comment type="subcellular location">
    <subcellularLocation>
        <location evidence="1">Mitochondrion inner membrane</location>
        <topology evidence="1">Lipid-anchor</topology>
    </subcellularLocation>
</comment>
<comment type="similarity">
    <text evidence="5">Belongs to the MICOS complex subunit Mic19 family. Metazoan Mic25 subfamily.</text>
</comment>
<comment type="sequence caution" evidence="5">
    <conflict type="erroneous initiation">
        <sequence resource="EMBL-CDS" id="AAH84878"/>
    </conflict>
    <text>Extended N-terminus.</text>
</comment>
<proteinExistence type="evidence at transcript level"/>
<keyword id="KW-0175">Coiled coil</keyword>
<keyword id="KW-1015">Disulfide bond</keyword>
<keyword id="KW-0449">Lipoprotein</keyword>
<keyword id="KW-0472">Membrane</keyword>
<keyword id="KW-0496">Mitochondrion</keyword>
<keyword id="KW-0999">Mitochondrion inner membrane</keyword>
<keyword id="KW-0519">Myristate</keyword>
<keyword id="KW-1185">Reference proteome</keyword>
<dbReference type="EMBL" id="BC084878">
    <property type="protein sequence ID" value="AAH84878.1"/>
    <property type="status" value="ALT_INIT"/>
    <property type="molecule type" value="mRNA"/>
</dbReference>
<dbReference type="SMR" id="Q5U509"/>
<dbReference type="AGR" id="Xenbase:XB-GENE-17332865"/>
<dbReference type="Xenbase" id="XB-GENE-17332865">
    <property type="gene designation" value="chchd6.L"/>
</dbReference>
<dbReference type="Proteomes" id="UP000186698">
    <property type="component" value="Unplaced"/>
</dbReference>
<dbReference type="GO" id="GO:0061617">
    <property type="term" value="C:MICOS complex"/>
    <property type="evidence" value="ECO:0007669"/>
    <property type="project" value="InterPro"/>
</dbReference>
<dbReference type="GO" id="GO:0005743">
    <property type="term" value="C:mitochondrial inner membrane"/>
    <property type="evidence" value="ECO:0000250"/>
    <property type="project" value="UniProtKB"/>
</dbReference>
<dbReference type="GO" id="GO:0005739">
    <property type="term" value="C:mitochondrion"/>
    <property type="evidence" value="ECO:0000250"/>
    <property type="project" value="UniProtKB"/>
</dbReference>
<dbReference type="GO" id="GO:0042407">
    <property type="term" value="P:cristae formation"/>
    <property type="evidence" value="ECO:0000250"/>
    <property type="project" value="UniProtKB"/>
</dbReference>
<dbReference type="GO" id="GO:0006974">
    <property type="term" value="P:DNA damage response"/>
    <property type="evidence" value="ECO:0000250"/>
    <property type="project" value="UniProtKB"/>
</dbReference>
<dbReference type="InterPro" id="IPR007964">
    <property type="entry name" value="MIC19/MIC25"/>
</dbReference>
<dbReference type="InterPro" id="IPR042860">
    <property type="entry name" value="MIC25"/>
</dbReference>
<dbReference type="PANTHER" id="PTHR47609">
    <property type="entry name" value="MICOS COMPLEX SUBUNIT MIC25"/>
    <property type="match status" value="1"/>
</dbReference>
<dbReference type="PANTHER" id="PTHR47609:SF1">
    <property type="entry name" value="MICOS COMPLEX SUBUNIT MIC25"/>
    <property type="match status" value="1"/>
</dbReference>
<dbReference type="Pfam" id="PF05300">
    <property type="entry name" value="MIC19_MIC25"/>
    <property type="match status" value="1"/>
</dbReference>
<dbReference type="PROSITE" id="PS51808">
    <property type="entry name" value="CHCH"/>
    <property type="match status" value="1"/>
</dbReference>
<organism>
    <name type="scientific">Xenopus laevis</name>
    <name type="common">African clawed frog</name>
    <dbReference type="NCBI Taxonomy" id="8355"/>
    <lineage>
        <taxon>Eukaryota</taxon>
        <taxon>Metazoa</taxon>
        <taxon>Chordata</taxon>
        <taxon>Craniata</taxon>
        <taxon>Vertebrata</taxon>
        <taxon>Euteleostomi</taxon>
        <taxon>Amphibia</taxon>
        <taxon>Batrachia</taxon>
        <taxon>Anura</taxon>
        <taxon>Pipoidea</taxon>
        <taxon>Pipidae</taxon>
        <taxon>Xenopodinae</taxon>
        <taxon>Xenopus</taxon>
        <taxon>Xenopus</taxon>
    </lineage>
</organism>
<evidence type="ECO:0000250" key="1">
    <source>
        <dbReference type="UniProtKB" id="Q9BRQ6"/>
    </source>
</evidence>
<evidence type="ECO:0000255" key="2"/>
<evidence type="ECO:0000255" key="3">
    <source>
        <dbReference type="PROSITE-ProRule" id="PRU01150"/>
    </source>
</evidence>
<evidence type="ECO:0000256" key="4">
    <source>
        <dbReference type="SAM" id="MobiDB-lite"/>
    </source>
</evidence>
<evidence type="ECO:0000305" key="5"/>
<reference key="1">
    <citation type="submission" date="2004-10" db="EMBL/GenBank/DDBJ databases">
        <authorList>
            <consortium name="NIH - Xenopus Gene Collection (XGC) project"/>
        </authorList>
    </citation>
    <scope>NUCLEOTIDE SEQUENCE [LARGE SCALE MRNA]</scope>
    <source>
        <tissue>Eye</tissue>
    </source>
</reference>
<gene>
    <name type="primary">chchd6-b</name>
    <name type="synonym">mic25-b</name>
</gene>
<feature type="initiator methionine" description="Removed" evidence="2">
    <location>
        <position position="1"/>
    </location>
</feature>
<feature type="chain" id="PRO_0000416912" description="MICOS complex subunit mic25-b">
    <location>
        <begin position="2"/>
        <end position="253"/>
    </location>
</feature>
<feature type="domain" description="CHCH" evidence="3">
    <location>
        <begin position="206"/>
        <end position="248"/>
    </location>
</feature>
<feature type="region of interest" description="Disordered" evidence="4">
    <location>
        <begin position="38"/>
        <end position="82"/>
    </location>
</feature>
<feature type="coiled-coil region" evidence="2">
    <location>
        <begin position="87"/>
        <end position="116"/>
    </location>
</feature>
<feature type="short sequence motif" description="Cx9C motif 1" evidence="3">
    <location>
        <begin position="209"/>
        <end position="219"/>
    </location>
</feature>
<feature type="short sequence motif" description="Cx9C motif 2" evidence="3">
    <location>
        <begin position="230"/>
        <end position="240"/>
    </location>
</feature>
<feature type="compositionally biased region" description="Low complexity" evidence="4">
    <location>
        <begin position="44"/>
        <end position="53"/>
    </location>
</feature>
<feature type="lipid moiety-binding region" description="N-myristoyl glycine" evidence="2">
    <location>
        <position position="2"/>
    </location>
</feature>
<feature type="disulfide bond" evidence="3">
    <location>
        <begin position="209"/>
        <end position="240"/>
    </location>
</feature>
<feature type="disulfide bond" evidence="3">
    <location>
        <begin position="219"/>
        <end position="230"/>
    </location>
</feature>
<protein>
    <recommendedName>
        <fullName>MICOS complex subunit mic25-b</fullName>
    </recommendedName>
    <alternativeName>
        <fullName>Coiled-coil-helix-coiled-coil-helix domain-containing protein 6B</fullName>
    </alternativeName>
</protein>
<name>MC25B_XENLA</name>
<sequence>MGGSESTGRKVSFGMDEEERVRVLRGVRLSDEVVTRMKDQSTWAASGAASGSATVPSKVGSSASHPAAASKDGAHKPTAAGVGHQYAEEDLYRRYEREQTLIQEELARLAKREKDAAHQRLSTSILREKKMADQERRKAEHLPADLDEWAKDLEHKEAELQNLNTFYREQLSSIEKKNLEIYRLTEEQFHTAATNAELRVKQRSYDPVCMDLQSNILKCYAENKQERLNCSDLAKEYQKCVSAAQKNLLFNHG</sequence>
<accession>Q5U509</accession>